<feature type="chain" id="PRO_0000294317" description="Fibrinogen C domain-containing protein 1">
    <location>
        <begin position="1"/>
        <end position="459"/>
    </location>
</feature>
<feature type="topological domain" description="Cytoplasmic" evidence="2">
    <location>
        <begin position="1"/>
        <end position="33"/>
    </location>
</feature>
<feature type="transmembrane region" description="Helical; Signal-anchor for type II membrane protein" evidence="2">
    <location>
        <begin position="34"/>
        <end position="54"/>
    </location>
</feature>
<feature type="topological domain" description="Extracellular" evidence="2">
    <location>
        <begin position="55"/>
        <end position="459"/>
    </location>
</feature>
<feature type="domain" description="Fibrinogen C-terminal" evidence="3">
    <location>
        <begin position="233"/>
        <end position="456"/>
    </location>
</feature>
<feature type="region of interest" description="Disordered" evidence="4">
    <location>
        <begin position="1"/>
        <end position="22"/>
    </location>
</feature>
<feature type="binding site" evidence="1">
    <location>
        <position position="391"/>
    </location>
    <ligand>
        <name>Ca(2+)</name>
        <dbReference type="ChEBI" id="CHEBI:29108"/>
    </ligand>
</feature>
<feature type="binding site" evidence="1">
    <location>
        <position position="393"/>
    </location>
    <ligand>
        <name>Ca(2+)</name>
        <dbReference type="ChEBI" id="CHEBI:29108"/>
    </ligand>
</feature>
<feature type="site" description="Implicated in ligand binding" evidence="1">
    <location>
        <position position="403"/>
    </location>
</feature>
<feature type="site" description="Implicated in ligand binding" evidence="1">
    <location>
        <position position="413"/>
    </location>
</feature>
<feature type="site" description="Implicated in ligand binding" evidence="1">
    <location>
        <position position="429"/>
    </location>
</feature>
<feature type="site" description="Implicated in ligand binding" evidence="1">
    <location>
        <position position="430"/>
    </location>
</feature>
<feature type="glycosylation site" description="N-linked (GlcNAc...) asparagine" evidence="2">
    <location>
        <position position="338"/>
    </location>
</feature>
<feature type="disulfide bond" evidence="3">
    <location>
        <begin position="242"/>
        <end position="271"/>
    </location>
</feature>
<feature type="disulfide bond" evidence="3">
    <location>
        <begin position="399"/>
        <end position="412"/>
    </location>
</feature>
<feature type="splice variant" id="VSP_026621" description="In isoform 2." evidence="5 6">
    <location>
        <begin position="1"/>
        <end position="190"/>
    </location>
</feature>
<feature type="sequence conflict" description="In Ref. 1; BAC32685." evidence="7" ref="1">
    <original>A</original>
    <variation>V</variation>
    <location>
        <position position="427"/>
    </location>
</feature>
<reference key="1">
    <citation type="journal article" date="2005" name="Science">
        <title>The transcriptional landscape of the mammalian genome.</title>
        <authorList>
            <person name="Carninci P."/>
            <person name="Kasukawa T."/>
            <person name="Katayama S."/>
            <person name="Gough J."/>
            <person name="Frith M.C."/>
            <person name="Maeda N."/>
            <person name="Oyama R."/>
            <person name="Ravasi T."/>
            <person name="Lenhard B."/>
            <person name="Wells C."/>
            <person name="Kodzius R."/>
            <person name="Shimokawa K."/>
            <person name="Bajic V.B."/>
            <person name="Brenner S.E."/>
            <person name="Batalov S."/>
            <person name="Forrest A.R."/>
            <person name="Zavolan M."/>
            <person name="Davis M.J."/>
            <person name="Wilming L.G."/>
            <person name="Aidinis V."/>
            <person name="Allen J.E."/>
            <person name="Ambesi-Impiombato A."/>
            <person name="Apweiler R."/>
            <person name="Aturaliya R.N."/>
            <person name="Bailey T.L."/>
            <person name="Bansal M."/>
            <person name="Baxter L."/>
            <person name="Beisel K.W."/>
            <person name="Bersano T."/>
            <person name="Bono H."/>
            <person name="Chalk A.M."/>
            <person name="Chiu K.P."/>
            <person name="Choudhary V."/>
            <person name="Christoffels A."/>
            <person name="Clutterbuck D.R."/>
            <person name="Crowe M.L."/>
            <person name="Dalla E."/>
            <person name="Dalrymple B.P."/>
            <person name="de Bono B."/>
            <person name="Della Gatta G."/>
            <person name="di Bernardo D."/>
            <person name="Down T."/>
            <person name="Engstrom P."/>
            <person name="Fagiolini M."/>
            <person name="Faulkner G."/>
            <person name="Fletcher C.F."/>
            <person name="Fukushima T."/>
            <person name="Furuno M."/>
            <person name="Futaki S."/>
            <person name="Gariboldi M."/>
            <person name="Georgii-Hemming P."/>
            <person name="Gingeras T.R."/>
            <person name="Gojobori T."/>
            <person name="Green R.E."/>
            <person name="Gustincich S."/>
            <person name="Harbers M."/>
            <person name="Hayashi Y."/>
            <person name="Hensch T.K."/>
            <person name="Hirokawa N."/>
            <person name="Hill D."/>
            <person name="Huminiecki L."/>
            <person name="Iacono M."/>
            <person name="Ikeo K."/>
            <person name="Iwama A."/>
            <person name="Ishikawa T."/>
            <person name="Jakt M."/>
            <person name="Kanapin A."/>
            <person name="Katoh M."/>
            <person name="Kawasawa Y."/>
            <person name="Kelso J."/>
            <person name="Kitamura H."/>
            <person name="Kitano H."/>
            <person name="Kollias G."/>
            <person name="Krishnan S.P."/>
            <person name="Kruger A."/>
            <person name="Kummerfeld S.K."/>
            <person name="Kurochkin I.V."/>
            <person name="Lareau L.F."/>
            <person name="Lazarevic D."/>
            <person name="Lipovich L."/>
            <person name="Liu J."/>
            <person name="Liuni S."/>
            <person name="McWilliam S."/>
            <person name="Madan Babu M."/>
            <person name="Madera M."/>
            <person name="Marchionni L."/>
            <person name="Matsuda H."/>
            <person name="Matsuzawa S."/>
            <person name="Miki H."/>
            <person name="Mignone F."/>
            <person name="Miyake S."/>
            <person name="Morris K."/>
            <person name="Mottagui-Tabar S."/>
            <person name="Mulder N."/>
            <person name="Nakano N."/>
            <person name="Nakauchi H."/>
            <person name="Ng P."/>
            <person name="Nilsson R."/>
            <person name="Nishiguchi S."/>
            <person name="Nishikawa S."/>
            <person name="Nori F."/>
            <person name="Ohara O."/>
            <person name="Okazaki Y."/>
            <person name="Orlando V."/>
            <person name="Pang K.C."/>
            <person name="Pavan W.J."/>
            <person name="Pavesi G."/>
            <person name="Pesole G."/>
            <person name="Petrovsky N."/>
            <person name="Piazza S."/>
            <person name="Reed J."/>
            <person name="Reid J.F."/>
            <person name="Ring B.Z."/>
            <person name="Ringwald M."/>
            <person name="Rost B."/>
            <person name="Ruan Y."/>
            <person name="Salzberg S.L."/>
            <person name="Sandelin A."/>
            <person name="Schneider C."/>
            <person name="Schoenbach C."/>
            <person name="Sekiguchi K."/>
            <person name="Semple C.A."/>
            <person name="Seno S."/>
            <person name="Sessa L."/>
            <person name="Sheng Y."/>
            <person name="Shibata Y."/>
            <person name="Shimada H."/>
            <person name="Shimada K."/>
            <person name="Silva D."/>
            <person name="Sinclair B."/>
            <person name="Sperling S."/>
            <person name="Stupka E."/>
            <person name="Sugiura K."/>
            <person name="Sultana R."/>
            <person name="Takenaka Y."/>
            <person name="Taki K."/>
            <person name="Tammoja K."/>
            <person name="Tan S.L."/>
            <person name="Tang S."/>
            <person name="Taylor M.S."/>
            <person name="Tegner J."/>
            <person name="Teichmann S.A."/>
            <person name="Ueda H.R."/>
            <person name="van Nimwegen E."/>
            <person name="Verardo R."/>
            <person name="Wei C.L."/>
            <person name="Yagi K."/>
            <person name="Yamanishi H."/>
            <person name="Zabarovsky E."/>
            <person name="Zhu S."/>
            <person name="Zimmer A."/>
            <person name="Hide W."/>
            <person name="Bult C."/>
            <person name="Grimmond S.M."/>
            <person name="Teasdale R.D."/>
            <person name="Liu E.T."/>
            <person name="Brusic V."/>
            <person name="Quackenbush J."/>
            <person name="Wahlestedt C."/>
            <person name="Mattick J.S."/>
            <person name="Hume D.A."/>
            <person name="Kai C."/>
            <person name="Sasaki D."/>
            <person name="Tomaru Y."/>
            <person name="Fukuda S."/>
            <person name="Kanamori-Katayama M."/>
            <person name="Suzuki M."/>
            <person name="Aoki J."/>
            <person name="Arakawa T."/>
            <person name="Iida J."/>
            <person name="Imamura K."/>
            <person name="Itoh M."/>
            <person name="Kato T."/>
            <person name="Kawaji H."/>
            <person name="Kawagashira N."/>
            <person name="Kawashima T."/>
            <person name="Kojima M."/>
            <person name="Kondo S."/>
            <person name="Konno H."/>
            <person name="Nakano K."/>
            <person name="Ninomiya N."/>
            <person name="Nishio T."/>
            <person name="Okada M."/>
            <person name="Plessy C."/>
            <person name="Shibata K."/>
            <person name="Shiraki T."/>
            <person name="Suzuki S."/>
            <person name="Tagami M."/>
            <person name="Waki K."/>
            <person name="Watahiki A."/>
            <person name="Okamura-Oho Y."/>
            <person name="Suzuki H."/>
            <person name="Kawai J."/>
            <person name="Hayashizaki Y."/>
        </authorList>
    </citation>
    <scope>NUCLEOTIDE SEQUENCE [LARGE SCALE MRNA] (ISOFORM 2)</scope>
    <source>
        <strain>C57BL/6J</strain>
        <tissue>Corpora quadrigemina</tissue>
        <tissue>Eye</tissue>
    </source>
</reference>
<reference key="2">
    <citation type="journal article" date="2009" name="PLoS Biol.">
        <title>Lineage-specific biology revealed by a finished genome assembly of the mouse.</title>
        <authorList>
            <person name="Church D.M."/>
            <person name="Goodstadt L."/>
            <person name="Hillier L.W."/>
            <person name="Zody M.C."/>
            <person name="Goldstein S."/>
            <person name="She X."/>
            <person name="Bult C.J."/>
            <person name="Agarwala R."/>
            <person name="Cherry J.L."/>
            <person name="DiCuccio M."/>
            <person name="Hlavina W."/>
            <person name="Kapustin Y."/>
            <person name="Meric P."/>
            <person name="Maglott D."/>
            <person name="Birtle Z."/>
            <person name="Marques A.C."/>
            <person name="Graves T."/>
            <person name="Zhou S."/>
            <person name="Teague B."/>
            <person name="Potamousis K."/>
            <person name="Churas C."/>
            <person name="Place M."/>
            <person name="Herschleb J."/>
            <person name="Runnheim R."/>
            <person name="Forrest D."/>
            <person name="Amos-Landgraf J."/>
            <person name="Schwartz D.C."/>
            <person name="Cheng Z."/>
            <person name="Lindblad-Toh K."/>
            <person name="Eichler E.E."/>
            <person name="Ponting C.P."/>
        </authorList>
    </citation>
    <scope>NUCLEOTIDE SEQUENCE [LARGE SCALE GENOMIC DNA]</scope>
    <source>
        <strain>C57BL/6J</strain>
    </source>
</reference>
<reference key="3">
    <citation type="journal article" date="2004" name="Genome Res.">
        <title>The status, quality, and expansion of the NIH full-length cDNA project: the Mammalian Gene Collection (MGC).</title>
        <authorList>
            <consortium name="The MGC Project Team"/>
        </authorList>
    </citation>
    <scope>NUCLEOTIDE SEQUENCE [LARGE SCALE MRNA] (ISOFORM 2)</scope>
    <source>
        <strain>C57BL/6J</strain>
        <tissue>Brain</tissue>
    </source>
</reference>
<evidence type="ECO:0000250" key="1"/>
<evidence type="ECO:0000255" key="2"/>
<evidence type="ECO:0000255" key="3">
    <source>
        <dbReference type="PROSITE-ProRule" id="PRU00739"/>
    </source>
</evidence>
<evidence type="ECO:0000256" key="4">
    <source>
        <dbReference type="SAM" id="MobiDB-lite"/>
    </source>
</evidence>
<evidence type="ECO:0000303" key="5">
    <source>
    </source>
</evidence>
<evidence type="ECO:0000303" key="6">
    <source>
    </source>
</evidence>
<evidence type="ECO:0000305" key="7"/>
<comment type="function">
    <text evidence="1">Acetyl group-binding receptor which shows a high-affinity and calcium-dependent binding to acetylated structures such as chitin, some N-acetylated carbohydrates, and amino acids, but not to their non-acetylated counterparts. Can facilitate the endocytosis of acetylated components (By similarity).</text>
</comment>
<comment type="subunit">
    <text evidence="1">Homotetramer; disulfide-linked.</text>
</comment>
<comment type="subcellular location">
    <subcellularLocation>
        <location evidence="7">Membrane</location>
        <topology evidence="7">Single-pass type II membrane protein</topology>
    </subcellularLocation>
</comment>
<comment type="alternative products">
    <event type="alternative splicing"/>
    <isoform>
        <id>A2AV25-1</id>
        <name>1</name>
        <sequence type="displayed"/>
    </isoform>
    <isoform>
        <id>A2AV25-2</id>
        <name>2</name>
        <sequence type="described" ref="VSP_026621"/>
    </isoform>
</comment>
<protein>
    <recommendedName>
        <fullName>Fibrinogen C domain-containing protein 1</fullName>
    </recommendedName>
</protein>
<organism>
    <name type="scientific">Mus musculus</name>
    <name type="common">Mouse</name>
    <dbReference type="NCBI Taxonomy" id="10090"/>
    <lineage>
        <taxon>Eukaryota</taxon>
        <taxon>Metazoa</taxon>
        <taxon>Chordata</taxon>
        <taxon>Craniata</taxon>
        <taxon>Vertebrata</taxon>
        <taxon>Euteleostomi</taxon>
        <taxon>Mammalia</taxon>
        <taxon>Eutheria</taxon>
        <taxon>Euarchontoglires</taxon>
        <taxon>Glires</taxon>
        <taxon>Rodentia</taxon>
        <taxon>Myomorpha</taxon>
        <taxon>Muroidea</taxon>
        <taxon>Muridae</taxon>
        <taxon>Murinae</taxon>
        <taxon>Mus</taxon>
        <taxon>Mus</taxon>
    </lineage>
</organism>
<sequence>MVHERWKTVGSASQLEDRPRDKPQRASCSYVLCTVLLSLAVLLAVAVTGVVLFLNHTHTPGTAPPPIVSTGTAGANSALVTVERADSSHLSLLIDPRCPDLTDSFARLEGIQASILRALSEHQAQPRLDGAPELLDALADQLPRLLTRASELQAECAGLRKGHSLLGQGLSTLQSEQGRLIQLLSESQGHMAHLVNSVSDVLEALQRERGLGRPRVKADLQRAPSRGARPRGCANGSRPRDCLDVLLSGQQDDGVYSIFPTHYPAGFQVYCDMRTDGGGWTVFQRREDGSVNFFRGWEAYREGFGKLTGEHWLGLKRIHALTTQAAYELHVDLEDFDNGTAYAHYGSFGVGLFSVDPEEDGYPLTVADYSGTAGDSLLKHSGMRFTTKDRDSDHSENNCAAFYRGAWWYRNCHTSNLNGQYLRGAHASYADGVEWSSWTGWQYSLKFSEMKIRPVREDR</sequence>
<accession>A2AV25</accession>
<accession>Q6P9R8</accession>
<accession>Q8BJE7</accession>
<accession>Q8BL54</accession>
<name>FBCD1_MOUSE</name>
<keyword id="KW-0025">Alternative splicing</keyword>
<keyword id="KW-0106">Calcium</keyword>
<keyword id="KW-0147">Chitin-binding</keyword>
<keyword id="KW-1015">Disulfide bond</keyword>
<keyword id="KW-0325">Glycoprotein</keyword>
<keyword id="KW-0472">Membrane</keyword>
<keyword id="KW-0479">Metal-binding</keyword>
<keyword id="KW-1185">Reference proteome</keyword>
<keyword id="KW-0735">Signal-anchor</keyword>
<keyword id="KW-0812">Transmembrane</keyword>
<keyword id="KW-1133">Transmembrane helix</keyword>
<gene>
    <name type="primary">Fibcd1</name>
</gene>
<dbReference type="EMBL" id="AK046338">
    <property type="protein sequence ID" value="BAC32685.1"/>
    <property type="molecule type" value="mRNA"/>
</dbReference>
<dbReference type="EMBL" id="AK084379">
    <property type="protein sequence ID" value="BAC39169.1"/>
    <property type="molecule type" value="mRNA"/>
</dbReference>
<dbReference type="EMBL" id="AL929275">
    <property type="status" value="NOT_ANNOTATED_CDS"/>
    <property type="molecule type" value="Genomic_DNA"/>
</dbReference>
<dbReference type="EMBL" id="BC060634">
    <property type="protein sequence ID" value="AAH60634.2"/>
    <property type="molecule type" value="mRNA"/>
</dbReference>
<dbReference type="CCDS" id="CCDS50564.1">
    <molecule id="A2AV25-1"/>
</dbReference>
<dbReference type="RefSeq" id="NP_849218.2">
    <molecule id="A2AV25-1"/>
    <property type="nucleotide sequence ID" value="NM_178887.4"/>
</dbReference>
<dbReference type="SMR" id="A2AV25"/>
<dbReference type="FunCoup" id="A2AV25">
    <property type="interactions" value="111"/>
</dbReference>
<dbReference type="STRING" id="10090.ENSMUSP00000028188"/>
<dbReference type="GlyCosmos" id="A2AV25">
    <property type="glycosylation" value="1 site, No reported glycans"/>
</dbReference>
<dbReference type="GlyGen" id="A2AV25">
    <property type="glycosylation" value="1 site"/>
</dbReference>
<dbReference type="iPTMnet" id="A2AV25"/>
<dbReference type="PhosphoSitePlus" id="A2AV25"/>
<dbReference type="PaxDb" id="10090-ENSMUSP00000028188"/>
<dbReference type="ProteomicsDB" id="267574">
    <molecule id="A2AV25-1"/>
</dbReference>
<dbReference type="ProteomicsDB" id="267575">
    <molecule id="A2AV25-2"/>
</dbReference>
<dbReference type="Antibodypedia" id="31542">
    <property type="antibodies" value="75 antibodies from 16 providers"/>
</dbReference>
<dbReference type="DNASU" id="98970"/>
<dbReference type="Ensembl" id="ENSMUST00000028188.8">
    <molecule id="A2AV25-1"/>
    <property type="protein sequence ID" value="ENSMUSP00000028188.8"/>
    <property type="gene ID" value="ENSMUSG00000026841.8"/>
</dbReference>
<dbReference type="GeneID" id="98970"/>
<dbReference type="KEGG" id="mmu:98970"/>
<dbReference type="UCSC" id="uc008jee.2">
    <molecule id="A2AV25-1"/>
    <property type="organism name" value="mouse"/>
</dbReference>
<dbReference type="AGR" id="MGI:2138953"/>
<dbReference type="CTD" id="84929"/>
<dbReference type="MGI" id="MGI:2138953">
    <property type="gene designation" value="Fibcd1"/>
</dbReference>
<dbReference type="VEuPathDB" id="HostDB:ENSMUSG00000026841"/>
<dbReference type="eggNOG" id="KOG2579">
    <property type="taxonomic scope" value="Eukaryota"/>
</dbReference>
<dbReference type="GeneTree" id="ENSGT00940000155976"/>
<dbReference type="HOGENOM" id="CLU_038628_5_1_1"/>
<dbReference type="InParanoid" id="A2AV25"/>
<dbReference type="OMA" id="MVNERWK"/>
<dbReference type="OrthoDB" id="9990035at2759"/>
<dbReference type="PhylomeDB" id="A2AV25"/>
<dbReference type="TreeFam" id="TF351983"/>
<dbReference type="BioGRID-ORCS" id="98970">
    <property type="hits" value="4 hits in 79 CRISPR screens"/>
</dbReference>
<dbReference type="PRO" id="PR:A2AV25"/>
<dbReference type="Proteomes" id="UP000000589">
    <property type="component" value="Chromosome 2"/>
</dbReference>
<dbReference type="RNAct" id="A2AV25">
    <property type="molecule type" value="protein"/>
</dbReference>
<dbReference type="Bgee" id="ENSMUSG00000026841">
    <property type="expression patterns" value="Expressed in Ammon's horn and 51 other cell types or tissues"/>
</dbReference>
<dbReference type="GO" id="GO:0016020">
    <property type="term" value="C:membrane"/>
    <property type="evidence" value="ECO:0000250"/>
    <property type="project" value="UniProtKB"/>
</dbReference>
<dbReference type="GO" id="GO:0008061">
    <property type="term" value="F:chitin binding"/>
    <property type="evidence" value="ECO:0000250"/>
    <property type="project" value="UniProtKB"/>
</dbReference>
<dbReference type="GO" id="GO:0046872">
    <property type="term" value="F:metal ion binding"/>
    <property type="evidence" value="ECO:0007669"/>
    <property type="project" value="UniProtKB-KW"/>
</dbReference>
<dbReference type="CDD" id="cd00087">
    <property type="entry name" value="FReD"/>
    <property type="match status" value="1"/>
</dbReference>
<dbReference type="FunFam" id="3.90.215.10:FF:000001">
    <property type="entry name" value="Tenascin isoform 1"/>
    <property type="match status" value="1"/>
</dbReference>
<dbReference type="Gene3D" id="3.90.215.10">
    <property type="entry name" value="Gamma Fibrinogen, chain A, domain 1"/>
    <property type="match status" value="1"/>
</dbReference>
<dbReference type="InterPro" id="IPR036056">
    <property type="entry name" value="Fibrinogen-like_C"/>
</dbReference>
<dbReference type="InterPro" id="IPR014716">
    <property type="entry name" value="Fibrinogen_a/b/g_C_1"/>
</dbReference>
<dbReference type="InterPro" id="IPR002181">
    <property type="entry name" value="Fibrinogen_a/b/g_C_dom"/>
</dbReference>
<dbReference type="InterPro" id="IPR050373">
    <property type="entry name" value="Fibrinogen_C-term_domain"/>
</dbReference>
<dbReference type="InterPro" id="IPR020837">
    <property type="entry name" value="Fibrinogen_CS"/>
</dbReference>
<dbReference type="NCBIfam" id="NF040941">
    <property type="entry name" value="GGGWT_bact"/>
    <property type="match status" value="1"/>
</dbReference>
<dbReference type="PANTHER" id="PTHR19143:SF45">
    <property type="entry name" value="FIBRINOGEN C DOMAIN-CONTAINING PROTEIN 1"/>
    <property type="match status" value="1"/>
</dbReference>
<dbReference type="PANTHER" id="PTHR19143">
    <property type="entry name" value="FIBRINOGEN/TENASCIN/ANGIOPOEITIN"/>
    <property type="match status" value="1"/>
</dbReference>
<dbReference type="Pfam" id="PF00147">
    <property type="entry name" value="Fibrinogen_C"/>
    <property type="match status" value="1"/>
</dbReference>
<dbReference type="SMART" id="SM00186">
    <property type="entry name" value="FBG"/>
    <property type="match status" value="1"/>
</dbReference>
<dbReference type="SUPFAM" id="SSF56496">
    <property type="entry name" value="Fibrinogen C-terminal domain-like"/>
    <property type="match status" value="1"/>
</dbReference>
<dbReference type="PROSITE" id="PS00514">
    <property type="entry name" value="FIBRINOGEN_C_1"/>
    <property type="match status" value="1"/>
</dbReference>
<dbReference type="PROSITE" id="PS51406">
    <property type="entry name" value="FIBRINOGEN_C_2"/>
    <property type="match status" value="1"/>
</dbReference>
<proteinExistence type="evidence at transcript level"/>